<evidence type="ECO:0000255" key="1">
    <source>
        <dbReference type="HAMAP-Rule" id="MF_00444"/>
    </source>
</evidence>
<evidence type="ECO:0000256" key="2">
    <source>
        <dbReference type="SAM" id="MobiDB-lite"/>
    </source>
</evidence>
<accession>Q9MTJ8</accession>
<keyword id="KW-0150">Chloroplast</keyword>
<keyword id="KW-0378">Hydrolase</keyword>
<keyword id="KW-0934">Plastid</keyword>
<keyword id="KW-0645">Protease</keyword>
<keyword id="KW-0720">Serine protease</keyword>
<sequence length="249" mass="27956">MPIGMPKIPFLLDGDEEDEEEDDATWVDLYNVLYRTRSIFLGDAIHFEVANHIAGLMIFLTIQDATQNLYFFINSPGGLAVAGLLIYDTMQYVTPPVYTLGLGVLASMASFLLVGGETSKRLMGPNGRVMIHQPESDYTHKDQSLEVQLDSGEVEDIRKMVIRVYLERTRLPREVLNDHLERNYFMTATEAKYYGIVDDIGIQNLLARLRAESASQDNSLDPDAPDESASQDNSLDPDAPDETRPPKLR</sequence>
<feature type="chain" id="PRO_0000179748" description="ATP-dependent Clp protease proteolytic subunit">
    <location>
        <begin position="1"/>
        <end position="249"/>
    </location>
</feature>
<feature type="region of interest" description="Disordered" evidence="2">
    <location>
        <begin position="212"/>
        <end position="249"/>
    </location>
</feature>
<feature type="active site" description="Nucleophile" evidence="1">
    <location>
        <position position="107"/>
    </location>
</feature>
<feature type="active site" evidence="1">
    <location>
        <position position="132"/>
    </location>
</feature>
<gene>
    <name evidence="1" type="primary">clpP</name>
</gene>
<dbReference type="EC" id="3.4.21.92" evidence="1"/>
<dbReference type="EMBL" id="AJ271079">
    <property type="protein sequence ID" value="CAB67184.2"/>
    <property type="molecule type" value="Genomic_DNA"/>
</dbReference>
<dbReference type="RefSeq" id="NP_084718.2">
    <property type="nucleotide sequence ID" value="NC_002693.2"/>
</dbReference>
<dbReference type="SMR" id="Q9MTJ8"/>
<dbReference type="MEROPS" id="S14.002"/>
<dbReference type="GeneID" id="802828"/>
<dbReference type="GO" id="GO:0009570">
    <property type="term" value="C:chloroplast stroma"/>
    <property type="evidence" value="ECO:0007669"/>
    <property type="project" value="UniProtKB-SubCell"/>
</dbReference>
<dbReference type="GO" id="GO:0009368">
    <property type="term" value="C:endopeptidase Clp complex"/>
    <property type="evidence" value="ECO:0007669"/>
    <property type="project" value="TreeGrafter"/>
</dbReference>
<dbReference type="GO" id="GO:0004176">
    <property type="term" value="F:ATP-dependent peptidase activity"/>
    <property type="evidence" value="ECO:0007669"/>
    <property type="project" value="InterPro"/>
</dbReference>
<dbReference type="GO" id="GO:0051117">
    <property type="term" value="F:ATPase binding"/>
    <property type="evidence" value="ECO:0007669"/>
    <property type="project" value="TreeGrafter"/>
</dbReference>
<dbReference type="GO" id="GO:0004252">
    <property type="term" value="F:serine-type endopeptidase activity"/>
    <property type="evidence" value="ECO:0007669"/>
    <property type="project" value="UniProtKB-UniRule"/>
</dbReference>
<dbReference type="GO" id="GO:0006515">
    <property type="term" value="P:protein quality control for misfolded or incompletely synthesized proteins"/>
    <property type="evidence" value="ECO:0007669"/>
    <property type="project" value="TreeGrafter"/>
</dbReference>
<dbReference type="CDD" id="cd07017">
    <property type="entry name" value="S14_ClpP_2"/>
    <property type="match status" value="1"/>
</dbReference>
<dbReference type="Gene3D" id="3.90.226.10">
    <property type="entry name" value="2-enoyl-CoA Hydratase, Chain A, domain 1"/>
    <property type="match status" value="1"/>
</dbReference>
<dbReference type="HAMAP" id="MF_00444">
    <property type="entry name" value="ClpP"/>
    <property type="match status" value="1"/>
</dbReference>
<dbReference type="InterPro" id="IPR001907">
    <property type="entry name" value="ClpP"/>
</dbReference>
<dbReference type="InterPro" id="IPR029045">
    <property type="entry name" value="ClpP/crotonase-like_dom_sf"/>
</dbReference>
<dbReference type="InterPro" id="IPR023562">
    <property type="entry name" value="ClpP/TepA"/>
</dbReference>
<dbReference type="InterPro" id="IPR033135">
    <property type="entry name" value="ClpP_His_AS"/>
</dbReference>
<dbReference type="PANTHER" id="PTHR10381">
    <property type="entry name" value="ATP-DEPENDENT CLP PROTEASE PROTEOLYTIC SUBUNIT"/>
    <property type="match status" value="1"/>
</dbReference>
<dbReference type="PANTHER" id="PTHR10381:SF73">
    <property type="entry name" value="ATP-DEPENDENT CLP PROTEASE PROTEOLYTIC SUBUNIT"/>
    <property type="match status" value="1"/>
</dbReference>
<dbReference type="Pfam" id="PF00574">
    <property type="entry name" value="CLP_protease"/>
    <property type="match status" value="1"/>
</dbReference>
<dbReference type="PRINTS" id="PR00127">
    <property type="entry name" value="CLPPROTEASEP"/>
</dbReference>
<dbReference type="SUPFAM" id="SSF52096">
    <property type="entry name" value="ClpP/crotonase"/>
    <property type="match status" value="1"/>
</dbReference>
<dbReference type="PROSITE" id="PS00382">
    <property type="entry name" value="CLP_PROTEASE_HIS"/>
    <property type="match status" value="1"/>
</dbReference>
<protein>
    <recommendedName>
        <fullName evidence="1">ATP-dependent Clp protease proteolytic subunit</fullName>
        <ecNumber evidence="1">3.4.21.92</ecNumber>
    </recommendedName>
    <alternativeName>
        <fullName evidence="1">Endopeptidase Clp</fullName>
    </alternativeName>
</protein>
<name>CLPP_OENEH</name>
<geneLocation type="chloroplast"/>
<organism>
    <name type="scientific">Oenothera elata subsp. hookeri</name>
    <name type="common">Hooker's evening primrose</name>
    <name type="synonym">Oenothera hookeri</name>
    <dbReference type="NCBI Taxonomy" id="85636"/>
    <lineage>
        <taxon>Eukaryota</taxon>
        <taxon>Viridiplantae</taxon>
        <taxon>Streptophyta</taxon>
        <taxon>Embryophyta</taxon>
        <taxon>Tracheophyta</taxon>
        <taxon>Spermatophyta</taxon>
        <taxon>Magnoliopsida</taxon>
        <taxon>eudicotyledons</taxon>
        <taxon>Gunneridae</taxon>
        <taxon>Pentapetalae</taxon>
        <taxon>rosids</taxon>
        <taxon>malvids</taxon>
        <taxon>Myrtales</taxon>
        <taxon>Onagraceae</taxon>
        <taxon>Onagroideae</taxon>
        <taxon>Onagreae</taxon>
        <taxon>Oenothera</taxon>
    </lineage>
</organism>
<reference key="1">
    <citation type="journal article" date="2000" name="Mol. Gen. Genet.">
        <title>Complete nucleotide sequence of the Oenothera elata plastid chromosome, representing plastome I of the five distinguishable Euoenothera plastomes.</title>
        <authorList>
            <person name="Hupfer H."/>
            <person name="Swiatek M."/>
            <person name="Hornung S."/>
            <person name="Herrmann R.G."/>
            <person name="Maier R.M."/>
            <person name="Chiu W.-L."/>
            <person name="Sears B."/>
        </authorList>
    </citation>
    <scope>NUCLEOTIDE SEQUENCE [LARGE SCALE GENOMIC DNA]</scope>
    <source>
        <strain>cv. Johansen</strain>
    </source>
</reference>
<reference key="2">
    <citation type="journal article" date="2008" name="Nucleic Acids Res.">
        <title>The complete nucleotide sequences of the five genetically distinct plastid genomes of Oenothera, subsection Oenothera: I. Sequence evaluation and plastome evolution.</title>
        <authorList>
            <person name="Greiner S."/>
            <person name="Wang X."/>
            <person name="Rauwolf U."/>
            <person name="Silber M.V."/>
            <person name="Mayer K."/>
            <person name="Meurer J."/>
            <person name="Haberer G."/>
            <person name="Herrmann R.G."/>
        </authorList>
    </citation>
    <scope>SEQUENCE REVISION TO 89 AND 94</scope>
</reference>
<proteinExistence type="inferred from homology"/>
<comment type="function">
    <text evidence="1">Cleaves peptides in various proteins in a process that requires ATP hydrolysis. Has a chymotrypsin-like activity. Plays a major role in the degradation of misfolded proteins.</text>
</comment>
<comment type="catalytic activity">
    <reaction evidence="1">
        <text>Hydrolysis of proteins to small peptides in the presence of ATP and magnesium. alpha-casein is the usual test substrate. In the absence of ATP, only oligopeptides shorter than five residues are hydrolyzed (such as succinyl-Leu-Tyr-|-NHMec, and Leu-Tyr-Leu-|-Tyr-Trp, in which cleavage of the -Tyr-|-Leu- and -Tyr-|-Trp bonds also occurs).</text>
        <dbReference type="EC" id="3.4.21.92"/>
    </reaction>
</comment>
<comment type="subunit">
    <text>Component of the chloroplastic Clp protease core complex.</text>
</comment>
<comment type="subcellular location">
    <subcellularLocation>
        <location evidence="1">Plastid</location>
        <location evidence="1">Chloroplast stroma</location>
    </subcellularLocation>
</comment>
<comment type="similarity">
    <text evidence="1">Belongs to the peptidase S14 family.</text>
</comment>